<evidence type="ECO:0000250" key="1"/>
<evidence type="ECO:0000305" key="2"/>
<accession>C7GQ91</accession>
<name>YIM1_YEAS2</name>
<proteinExistence type="inferred from homology"/>
<feature type="chain" id="PRO_0000409681" description="Protein YIM1">
    <location>
        <begin position="1"/>
        <end position="365"/>
    </location>
</feature>
<keyword id="KW-0551">Lipid droplet</keyword>
<keyword id="KW-0496">Mitochondrion</keyword>
<gene>
    <name type="primary">YIM1</name>
    <name type="ORF">C1Q_02496</name>
</gene>
<comment type="subcellular location">
    <subcellularLocation>
        <location evidence="1">Lipid droplet</location>
    </subcellularLocation>
    <subcellularLocation>
        <location evidence="1">Mitochondrion</location>
    </subcellularLocation>
</comment>
<comment type="similarity">
    <text evidence="2">Belongs to the YIM1 family.</text>
</comment>
<reference key="1">
    <citation type="journal article" date="2009" name="Genome Res.">
        <title>Genome structure of a Saccharomyces cerevisiae strain widely used in bioethanol production.</title>
        <authorList>
            <person name="Argueso J.L."/>
            <person name="Carazzolle M.F."/>
            <person name="Mieczkowski P.A."/>
            <person name="Duarte F.M."/>
            <person name="Netto O.V.C."/>
            <person name="Missawa S.K."/>
            <person name="Galzerani F."/>
            <person name="Costa G.G.L."/>
            <person name="Vidal R.O."/>
            <person name="Noronha M.F."/>
            <person name="Dominska M."/>
            <person name="Andrietta M.G.S."/>
            <person name="Andrietta S.R."/>
            <person name="Cunha A.F."/>
            <person name="Gomes L.H."/>
            <person name="Tavares F.C.A."/>
            <person name="Alcarde A.R."/>
            <person name="Dietrich F.S."/>
            <person name="McCusker J.H."/>
            <person name="Petes T.D."/>
            <person name="Pereira G.A.G."/>
        </authorList>
    </citation>
    <scope>NUCLEOTIDE SEQUENCE [LARGE SCALE GENOMIC DNA]</scope>
    <source>
        <strain>JAY291</strain>
    </source>
</reference>
<protein>
    <recommendedName>
        <fullName>Protein YIM1</fullName>
    </recommendedName>
</protein>
<dbReference type="EMBL" id="ACFL01000115">
    <property type="protein sequence ID" value="EEU07038.1"/>
    <property type="molecule type" value="Genomic_DNA"/>
</dbReference>
<dbReference type="SMR" id="C7GQ91"/>
<dbReference type="Proteomes" id="UP000008073">
    <property type="component" value="Unassembled WGS sequence"/>
</dbReference>
<dbReference type="GO" id="GO:0005811">
    <property type="term" value="C:lipid droplet"/>
    <property type="evidence" value="ECO:0007669"/>
    <property type="project" value="UniProtKB-SubCell"/>
</dbReference>
<dbReference type="GO" id="GO:0005739">
    <property type="term" value="C:mitochondrion"/>
    <property type="evidence" value="ECO:0007669"/>
    <property type="project" value="UniProtKB-SubCell"/>
</dbReference>
<dbReference type="CDD" id="cd08247">
    <property type="entry name" value="AST1_like"/>
    <property type="match status" value="1"/>
</dbReference>
<dbReference type="Gene3D" id="3.90.180.10">
    <property type="entry name" value="Medium-chain alcohol dehydrogenases, catalytic domain"/>
    <property type="match status" value="1"/>
</dbReference>
<dbReference type="Gene3D" id="3.40.50.720">
    <property type="entry name" value="NAD(P)-binding Rossmann-like Domain"/>
    <property type="match status" value="1"/>
</dbReference>
<dbReference type="InterPro" id="IPR013154">
    <property type="entry name" value="ADH-like_N"/>
</dbReference>
<dbReference type="InterPro" id="IPR011032">
    <property type="entry name" value="GroES-like_sf"/>
</dbReference>
<dbReference type="InterPro" id="IPR036291">
    <property type="entry name" value="NAD(P)-bd_dom_sf"/>
</dbReference>
<dbReference type="InterPro" id="IPR050700">
    <property type="entry name" value="YIM1/Zinc_Alcohol_DH_Fams"/>
</dbReference>
<dbReference type="PANTHER" id="PTHR11695">
    <property type="entry name" value="ALCOHOL DEHYDROGENASE RELATED"/>
    <property type="match status" value="1"/>
</dbReference>
<dbReference type="PANTHER" id="PTHR11695:SF294">
    <property type="entry name" value="RETICULON-4-INTERACTING PROTEIN 1, MITOCHONDRIAL"/>
    <property type="match status" value="1"/>
</dbReference>
<dbReference type="Pfam" id="PF08240">
    <property type="entry name" value="ADH_N"/>
    <property type="match status" value="1"/>
</dbReference>
<dbReference type="Pfam" id="PF13602">
    <property type="entry name" value="ADH_zinc_N_2"/>
    <property type="match status" value="1"/>
</dbReference>
<dbReference type="SUPFAM" id="SSF50129">
    <property type="entry name" value="GroES-like"/>
    <property type="match status" value="1"/>
</dbReference>
<dbReference type="SUPFAM" id="SSF51735">
    <property type="entry name" value="NAD(P)-binding Rossmann-fold domains"/>
    <property type="match status" value="1"/>
</dbReference>
<sequence>MSDEIVTNKSVTYVNNTTPVTITSSELDLRSCYQDDEVVIEVHAAALNPIDFITHQLCNSYIFGKYPKTYSRDYSGVIIKAGKDVDNRWKVGDKVNGMYSHIYGERGTLTHYLILNPAKDIPITHMVEVPKDENDPYDDFVYAAAWPLTFGTAFSTLYDFKKDWTSDSKVLVIGASTSVSYAFVHIAKNYFNIGTVVGICSKNSIERNKKLGYDYLVPYDEGSIVENVKKLKQIVLENDKFDMIFDSVGNHDFFPVIDQFLKPKAKNSFYVTIAGNNKANYKNISWRDFVSLSSILKAINPFKKYNWRFGHPYPPNNFIEVGNEMIKKGTYKPPIDSVYEFDQYKEAIDRLMSNRAKGKVVVKMK</sequence>
<organism>
    <name type="scientific">Saccharomyces cerevisiae (strain JAY291)</name>
    <name type="common">Baker's yeast</name>
    <dbReference type="NCBI Taxonomy" id="574961"/>
    <lineage>
        <taxon>Eukaryota</taxon>
        <taxon>Fungi</taxon>
        <taxon>Dikarya</taxon>
        <taxon>Ascomycota</taxon>
        <taxon>Saccharomycotina</taxon>
        <taxon>Saccharomycetes</taxon>
        <taxon>Saccharomycetales</taxon>
        <taxon>Saccharomycetaceae</taxon>
        <taxon>Saccharomyces</taxon>
    </lineage>
</organism>